<accession>A5CWY7</accession>
<protein>
    <recommendedName>
        <fullName evidence="1">Undecaprenyl-diphosphatase</fullName>
        <ecNumber evidence="1">3.6.1.27</ecNumber>
    </recommendedName>
    <alternativeName>
        <fullName evidence="1">Bacitracin resistance protein</fullName>
    </alternativeName>
    <alternativeName>
        <fullName evidence="1">Undecaprenyl pyrophosphate phosphatase</fullName>
    </alternativeName>
</protein>
<keyword id="KW-0046">Antibiotic resistance</keyword>
<keyword id="KW-0997">Cell inner membrane</keyword>
<keyword id="KW-1003">Cell membrane</keyword>
<keyword id="KW-0133">Cell shape</keyword>
<keyword id="KW-0961">Cell wall biogenesis/degradation</keyword>
<keyword id="KW-0378">Hydrolase</keyword>
<keyword id="KW-0472">Membrane</keyword>
<keyword id="KW-0573">Peptidoglycan synthesis</keyword>
<keyword id="KW-1185">Reference proteome</keyword>
<keyword id="KW-0812">Transmembrane</keyword>
<keyword id="KW-1133">Transmembrane helix</keyword>
<comment type="function">
    <text evidence="1">Catalyzes the dephosphorylation of undecaprenyl diphosphate (UPP). Confers resistance to bacitracin.</text>
</comment>
<comment type="catalytic activity">
    <reaction evidence="1">
        <text>di-trans,octa-cis-undecaprenyl diphosphate + H2O = di-trans,octa-cis-undecaprenyl phosphate + phosphate + H(+)</text>
        <dbReference type="Rhea" id="RHEA:28094"/>
        <dbReference type="ChEBI" id="CHEBI:15377"/>
        <dbReference type="ChEBI" id="CHEBI:15378"/>
        <dbReference type="ChEBI" id="CHEBI:43474"/>
        <dbReference type="ChEBI" id="CHEBI:58405"/>
        <dbReference type="ChEBI" id="CHEBI:60392"/>
        <dbReference type="EC" id="3.6.1.27"/>
    </reaction>
</comment>
<comment type="subcellular location">
    <subcellularLocation>
        <location evidence="1">Cell inner membrane</location>
        <topology evidence="1">Multi-pass membrane protein</topology>
    </subcellularLocation>
</comment>
<comment type="miscellaneous">
    <text>Bacitracin is thought to be involved in the inhibition of peptidoglycan synthesis by sequestering undecaprenyl diphosphate, thereby reducing the pool of lipid carrier available.</text>
</comment>
<comment type="similarity">
    <text evidence="1">Belongs to the UppP family.</text>
</comment>
<proteinExistence type="inferred from homology"/>
<organism>
    <name type="scientific">Vesicomyosocius okutanii subsp. Calyptogena okutanii (strain HA)</name>
    <dbReference type="NCBI Taxonomy" id="412965"/>
    <lineage>
        <taxon>Bacteria</taxon>
        <taxon>Pseudomonadati</taxon>
        <taxon>Pseudomonadota</taxon>
        <taxon>Gammaproteobacteria</taxon>
        <taxon>Candidatus Pseudothioglobaceae</taxon>
        <taxon>Candidatus Vesicomyosocius</taxon>
    </lineage>
</organism>
<reference key="1">
    <citation type="journal article" date="2007" name="Curr. Biol.">
        <title>Reduced genome of the thioautotrophic intracellular symbiont in a deep-sea clam, Calyptogena okutanii.</title>
        <authorList>
            <person name="Kuwahara H."/>
            <person name="Yoshida T."/>
            <person name="Takaki Y."/>
            <person name="Shimamura S."/>
            <person name="Nishi S."/>
            <person name="Harada M."/>
            <person name="Matsuyama K."/>
            <person name="Takishita K."/>
            <person name="Kawato M."/>
            <person name="Uematsu K."/>
            <person name="Fujiwara Y."/>
            <person name="Sato T."/>
            <person name="Kato C."/>
            <person name="Kitagawa M."/>
            <person name="Kato I."/>
            <person name="Maruyama T."/>
        </authorList>
    </citation>
    <scope>NUCLEOTIDE SEQUENCE [LARGE SCALE GENOMIC DNA]</scope>
    <source>
        <strain>HA</strain>
    </source>
</reference>
<feature type="chain" id="PRO_0000303039" description="Undecaprenyl-diphosphatase">
    <location>
        <begin position="1"/>
        <end position="264"/>
    </location>
</feature>
<feature type="transmembrane region" description="Helical" evidence="1">
    <location>
        <begin position="7"/>
        <end position="27"/>
    </location>
</feature>
<feature type="transmembrane region" description="Helical" evidence="1">
    <location>
        <begin position="41"/>
        <end position="61"/>
    </location>
</feature>
<feature type="transmembrane region" description="Helical" evidence="1">
    <location>
        <begin position="89"/>
        <end position="109"/>
    </location>
</feature>
<feature type="transmembrane region" description="Helical" evidence="1">
    <location>
        <begin position="114"/>
        <end position="134"/>
    </location>
</feature>
<feature type="transmembrane region" description="Helical" evidence="1">
    <location>
        <begin position="144"/>
        <end position="164"/>
    </location>
</feature>
<feature type="transmembrane region" description="Helical" evidence="1">
    <location>
        <begin position="186"/>
        <end position="206"/>
    </location>
</feature>
<feature type="transmembrane region" description="Helical" evidence="1">
    <location>
        <begin position="219"/>
        <end position="239"/>
    </location>
</feature>
<feature type="transmembrane region" description="Helical" evidence="1">
    <location>
        <begin position="244"/>
        <end position="264"/>
    </location>
</feature>
<sequence length="264" mass="29460">MDVSQTIVLALIQGLSEFLPISSSAHLILVPKLTNWTDQGLIFDVVVHMGTLSAVIFYYQAMIRSLFFDFYYSIIKRQIIGQSKLAWGVLLGTIPIGLVGMIFKDFVAVDLRSIEIIAYTTLVFGLLLGFASWFNHKNKNPKSTISWIDVSFVSMMQILALIPGTSRSGITITACMLVGLSRKLSIQFSFLLSIPVITLSLILMLIDLYHQTQLVNVSLLVLGFVISTISAYATIIFVIRLIDMVGMTPFVIYRLILGVFLFFL</sequence>
<dbReference type="EC" id="3.6.1.27" evidence="1"/>
<dbReference type="EMBL" id="AP009247">
    <property type="protein sequence ID" value="BAF61528.1"/>
    <property type="molecule type" value="Genomic_DNA"/>
</dbReference>
<dbReference type="RefSeq" id="WP_011929798.1">
    <property type="nucleotide sequence ID" value="NC_009465.1"/>
</dbReference>
<dbReference type="SMR" id="A5CWY7"/>
<dbReference type="STRING" id="412965.COSY_0409"/>
<dbReference type="KEGG" id="vok:COSY_0409"/>
<dbReference type="eggNOG" id="COG1968">
    <property type="taxonomic scope" value="Bacteria"/>
</dbReference>
<dbReference type="HOGENOM" id="CLU_060296_1_0_6"/>
<dbReference type="OrthoDB" id="9808289at2"/>
<dbReference type="Proteomes" id="UP000000247">
    <property type="component" value="Chromosome"/>
</dbReference>
<dbReference type="GO" id="GO:0005886">
    <property type="term" value="C:plasma membrane"/>
    <property type="evidence" value="ECO:0007669"/>
    <property type="project" value="UniProtKB-SubCell"/>
</dbReference>
<dbReference type="GO" id="GO:0050380">
    <property type="term" value="F:undecaprenyl-diphosphatase activity"/>
    <property type="evidence" value="ECO:0007669"/>
    <property type="project" value="UniProtKB-UniRule"/>
</dbReference>
<dbReference type="GO" id="GO:0071555">
    <property type="term" value="P:cell wall organization"/>
    <property type="evidence" value="ECO:0007669"/>
    <property type="project" value="UniProtKB-KW"/>
</dbReference>
<dbReference type="GO" id="GO:0009252">
    <property type="term" value="P:peptidoglycan biosynthetic process"/>
    <property type="evidence" value="ECO:0007669"/>
    <property type="project" value="UniProtKB-KW"/>
</dbReference>
<dbReference type="GO" id="GO:0008360">
    <property type="term" value="P:regulation of cell shape"/>
    <property type="evidence" value="ECO:0007669"/>
    <property type="project" value="UniProtKB-KW"/>
</dbReference>
<dbReference type="GO" id="GO:0046677">
    <property type="term" value="P:response to antibiotic"/>
    <property type="evidence" value="ECO:0007669"/>
    <property type="project" value="UniProtKB-UniRule"/>
</dbReference>
<dbReference type="HAMAP" id="MF_01006">
    <property type="entry name" value="Undec_diphosphatase"/>
    <property type="match status" value="1"/>
</dbReference>
<dbReference type="InterPro" id="IPR003824">
    <property type="entry name" value="UppP"/>
</dbReference>
<dbReference type="NCBIfam" id="NF001393">
    <property type="entry name" value="PRK00281.2-4"/>
    <property type="match status" value="1"/>
</dbReference>
<dbReference type="PANTHER" id="PTHR30622">
    <property type="entry name" value="UNDECAPRENYL-DIPHOSPHATASE"/>
    <property type="match status" value="1"/>
</dbReference>
<dbReference type="PANTHER" id="PTHR30622:SF4">
    <property type="entry name" value="UNDECAPRENYL-DIPHOSPHATASE"/>
    <property type="match status" value="1"/>
</dbReference>
<dbReference type="Pfam" id="PF02673">
    <property type="entry name" value="BacA"/>
    <property type="match status" value="1"/>
</dbReference>
<gene>
    <name evidence="1" type="primary">uppP</name>
    <name type="synonym">bacA</name>
    <name type="ordered locus">COSY_0409</name>
</gene>
<evidence type="ECO:0000255" key="1">
    <source>
        <dbReference type="HAMAP-Rule" id="MF_01006"/>
    </source>
</evidence>
<name>UPPP_VESOH</name>